<protein>
    <recommendedName>
        <fullName evidence="1">1-deoxy-D-xylulose 5-phosphate reductoisomerase</fullName>
        <shortName evidence="1">DXP reductoisomerase</shortName>
        <ecNumber evidence="1">1.1.1.267</ecNumber>
    </recommendedName>
    <alternativeName>
        <fullName evidence="1">1-deoxyxylulose-5-phosphate reductoisomerase</fullName>
    </alternativeName>
    <alternativeName>
        <fullName evidence="1">2-C-methyl-D-erythritol 4-phosphate synthase</fullName>
    </alternativeName>
</protein>
<keyword id="KW-0414">Isoprene biosynthesis</keyword>
<keyword id="KW-0464">Manganese</keyword>
<keyword id="KW-0479">Metal-binding</keyword>
<keyword id="KW-0521">NADP</keyword>
<keyword id="KW-0560">Oxidoreductase</keyword>
<gene>
    <name evidence="1" type="primary">dxr</name>
    <name type="ordered locus">Bcen2424_2013</name>
</gene>
<evidence type="ECO:0000255" key="1">
    <source>
        <dbReference type="HAMAP-Rule" id="MF_00183"/>
    </source>
</evidence>
<feature type="chain" id="PRO_1000020224" description="1-deoxy-D-xylulose 5-phosphate reductoisomerase">
    <location>
        <begin position="1"/>
        <end position="398"/>
    </location>
</feature>
<feature type="binding site" evidence="1">
    <location>
        <position position="11"/>
    </location>
    <ligand>
        <name>NADPH</name>
        <dbReference type="ChEBI" id="CHEBI:57783"/>
    </ligand>
</feature>
<feature type="binding site" evidence="1">
    <location>
        <position position="12"/>
    </location>
    <ligand>
        <name>NADPH</name>
        <dbReference type="ChEBI" id="CHEBI:57783"/>
    </ligand>
</feature>
<feature type="binding site" evidence="1">
    <location>
        <position position="13"/>
    </location>
    <ligand>
        <name>NADPH</name>
        <dbReference type="ChEBI" id="CHEBI:57783"/>
    </ligand>
</feature>
<feature type="binding site" evidence="1">
    <location>
        <position position="14"/>
    </location>
    <ligand>
        <name>NADPH</name>
        <dbReference type="ChEBI" id="CHEBI:57783"/>
    </ligand>
</feature>
<feature type="binding site" evidence="1">
    <location>
        <position position="38"/>
    </location>
    <ligand>
        <name>NADPH</name>
        <dbReference type="ChEBI" id="CHEBI:57783"/>
    </ligand>
</feature>
<feature type="binding site" evidence="1">
    <location>
        <position position="39"/>
    </location>
    <ligand>
        <name>NADPH</name>
        <dbReference type="ChEBI" id="CHEBI:57783"/>
    </ligand>
</feature>
<feature type="binding site" evidence="1">
    <location>
        <position position="125"/>
    </location>
    <ligand>
        <name>NADPH</name>
        <dbReference type="ChEBI" id="CHEBI:57783"/>
    </ligand>
</feature>
<feature type="binding site" evidence="1">
    <location>
        <position position="126"/>
    </location>
    <ligand>
        <name>1-deoxy-D-xylulose 5-phosphate</name>
        <dbReference type="ChEBI" id="CHEBI:57792"/>
    </ligand>
</feature>
<feature type="binding site" evidence="1">
    <location>
        <position position="127"/>
    </location>
    <ligand>
        <name>NADPH</name>
        <dbReference type="ChEBI" id="CHEBI:57783"/>
    </ligand>
</feature>
<feature type="binding site" evidence="1">
    <location>
        <position position="151"/>
    </location>
    <ligand>
        <name>Mn(2+)</name>
        <dbReference type="ChEBI" id="CHEBI:29035"/>
    </ligand>
</feature>
<feature type="binding site" evidence="1">
    <location>
        <position position="152"/>
    </location>
    <ligand>
        <name>1-deoxy-D-xylulose 5-phosphate</name>
        <dbReference type="ChEBI" id="CHEBI:57792"/>
    </ligand>
</feature>
<feature type="binding site" evidence="1">
    <location>
        <position position="153"/>
    </location>
    <ligand>
        <name>1-deoxy-D-xylulose 5-phosphate</name>
        <dbReference type="ChEBI" id="CHEBI:57792"/>
    </ligand>
</feature>
<feature type="binding site" evidence="1">
    <location>
        <position position="153"/>
    </location>
    <ligand>
        <name>Mn(2+)</name>
        <dbReference type="ChEBI" id="CHEBI:29035"/>
    </ligand>
</feature>
<feature type="binding site" evidence="1">
    <location>
        <position position="179"/>
    </location>
    <ligand>
        <name>1-deoxy-D-xylulose 5-phosphate</name>
        <dbReference type="ChEBI" id="CHEBI:57792"/>
    </ligand>
</feature>
<feature type="binding site" evidence="1">
    <location>
        <position position="202"/>
    </location>
    <ligand>
        <name>1-deoxy-D-xylulose 5-phosphate</name>
        <dbReference type="ChEBI" id="CHEBI:57792"/>
    </ligand>
</feature>
<feature type="binding site" evidence="1">
    <location>
        <position position="208"/>
    </location>
    <ligand>
        <name>NADPH</name>
        <dbReference type="ChEBI" id="CHEBI:57783"/>
    </ligand>
</feature>
<feature type="binding site" evidence="1">
    <location>
        <position position="215"/>
    </location>
    <ligand>
        <name>1-deoxy-D-xylulose 5-phosphate</name>
        <dbReference type="ChEBI" id="CHEBI:57792"/>
    </ligand>
</feature>
<feature type="binding site" evidence="1">
    <location>
        <position position="220"/>
    </location>
    <ligand>
        <name>1-deoxy-D-xylulose 5-phosphate</name>
        <dbReference type="ChEBI" id="CHEBI:57792"/>
    </ligand>
</feature>
<feature type="binding site" evidence="1">
    <location>
        <position position="221"/>
    </location>
    <ligand>
        <name>1-deoxy-D-xylulose 5-phosphate</name>
        <dbReference type="ChEBI" id="CHEBI:57792"/>
    </ligand>
</feature>
<feature type="binding site" evidence="1">
    <location>
        <position position="224"/>
    </location>
    <ligand>
        <name>1-deoxy-D-xylulose 5-phosphate</name>
        <dbReference type="ChEBI" id="CHEBI:57792"/>
    </ligand>
</feature>
<feature type="binding site" evidence="1">
    <location>
        <position position="224"/>
    </location>
    <ligand>
        <name>Mn(2+)</name>
        <dbReference type="ChEBI" id="CHEBI:29035"/>
    </ligand>
</feature>
<proteinExistence type="inferred from homology"/>
<dbReference type="EC" id="1.1.1.267" evidence="1"/>
<dbReference type="EMBL" id="CP000458">
    <property type="protein sequence ID" value="ABK08764.1"/>
    <property type="molecule type" value="Genomic_DNA"/>
</dbReference>
<dbReference type="RefSeq" id="WP_006483824.1">
    <property type="nucleotide sequence ID" value="NC_008542.1"/>
</dbReference>
<dbReference type="SMR" id="A0K8D7"/>
<dbReference type="KEGG" id="bch:Bcen2424_2013"/>
<dbReference type="HOGENOM" id="CLU_035714_4_0_4"/>
<dbReference type="UniPathway" id="UPA00056">
    <property type="reaction ID" value="UER00092"/>
</dbReference>
<dbReference type="GO" id="GO:0030604">
    <property type="term" value="F:1-deoxy-D-xylulose-5-phosphate reductoisomerase activity"/>
    <property type="evidence" value="ECO:0007669"/>
    <property type="project" value="UniProtKB-UniRule"/>
</dbReference>
<dbReference type="GO" id="GO:0030145">
    <property type="term" value="F:manganese ion binding"/>
    <property type="evidence" value="ECO:0007669"/>
    <property type="project" value="TreeGrafter"/>
</dbReference>
<dbReference type="GO" id="GO:0070402">
    <property type="term" value="F:NADPH binding"/>
    <property type="evidence" value="ECO:0007669"/>
    <property type="project" value="InterPro"/>
</dbReference>
<dbReference type="GO" id="GO:0051484">
    <property type="term" value="P:isopentenyl diphosphate biosynthetic process, methylerythritol 4-phosphate pathway involved in terpenoid biosynthetic process"/>
    <property type="evidence" value="ECO:0007669"/>
    <property type="project" value="TreeGrafter"/>
</dbReference>
<dbReference type="FunFam" id="3.40.50.720:FF:000045">
    <property type="entry name" value="1-deoxy-D-xylulose 5-phosphate reductoisomerase"/>
    <property type="match status" value="1"/>
</dbReference>
<dbReference type="Gene3D" id="1.10.1740.10">
    <property type="match status" value="1"/>
</dbReference>
<dbReference type="Gene3D" id="3.40.50.720">
    <property type="entry name" value="NAD(P)-binding Rossmann-like Domain"/>
    <property type="match status" value="1"/>
</dbReference>
<dbReference type="HAMAP" id="MF_00183">
    <property type="entry name" value="DXP_reductoisom"/>
    <property type="match status" value="1"/>
</dbReference>
<dbReference type="InterPro" id="IPR003821">
    <property type="entry name" value="DXP_reductoisomerase"/>
</dbReference>
<dbReference type="InterPro" id="IPR013644">
    <property type="entry name" value="DXP_reductoisomerase_C"/>
</dbReference>
<dbReference type="InterPro" id="IPR013512">
    <property type="entry name" value="DXP_reductoisomerase_N"/>
</dbReference>
<dbReference type="InterPro" id="IPR026877">
    <property type="entry name" value="DXPR_C"/>
</dbReference>
<dbReference type="InterPro" id="IPR036169">
    <property type="entry name" value="DXPR_C_sf"/>
</dbReference>
<dbReference type="InterPro" id="IPR036291">
    <property type="entry name" value="NAD(P)-bd_dom_sf"/>
</dbReference>
<dbReference type="NCBIfam" id="TIGR00243">
    <property type="entry name" value="Dxr"/>
    <property type="match status" value="1"/>
</dbReference>
<dbReference type="NCBIfam" id="NF003938">
    <property type="entry name" value="PRK05447.1-1"/>
    <property type="match status" value="1"/>
</dbReference>
<dbReference type="NCBIfam" id="NF009114">
    <property type="entry name" value="PRK12464.1"/>
    <property type="match status" value="1"/>
</dbReference>
<dbReference type="PANTHER" id="PTHR30525">
    <property type="entry name" value="1-DEOXY-D-XYLULOSE 5-PHOSPHATE REDUCTOISOMERASE"/>
    <property type="match status" value="1"/>
</dbReference>
<dbReference type="PANTHER" id="PTHR30525:SF0">
    <property type="entry name" value="1-DEOXY-D-XYLULOSE 5-PHOSPHATE REDUCTOISOMERASE, CHLOROPLASTIC"/>
    <property type="match status" value="1"/>
</dbReference>
<dbReference type="Pfam" id="PF08436">
    <property type="entry name" value="DXP_redisom_C"/>
    <property type="match status" value="1"/>
</dbReference>
<dbReference type="Pfam" id="PF02670">
    <property type="entry name" value="DXP_reductoisom"/>
    <property type="match status" value="1"/>
</dbReference>
<dbReference type="Pfam" id="PF13288">
    <property type="entry name" value="DXPR_C"/>
    <property type="match status" value="1"/>
</dbReference>
<dbReference type="PIRSF" id="PIRSF006205">
    <property type="entry name" value="Dxp_reductismrs"/>
    <property type="match status" value="1"/>
</dbReference>
<dbReference type="SUPFAM" id="SSF69055">
    <property type="entry name" value="1-deoxy-D-xylulose-5-phosphate reductoisomerase, C-terminal domain"/>
    <property type="match status" value="1"/>
</dbReference>
<dbReference type="SUPFAM" id="SSF55347">
    <property type="entry name" value="Glyceraldehyde-3-phosphate dehydrogenase-like, C-terminal domain"/>
    <property type="match status" value="1"/>
</dbReference>
<dbReference type="SUPFAM" id="SSF51735">
    <property type="entry name" value="NAD(P)-binding Rossmann-fold domains"/>
    <property type="match status" value="1"/>
</dbReference>
<sequence>MQKRLTLLGSTGSIGDSTLDVVARHPERFSVYALTAHRNGDKLVEQCLRFAPEVAVVGDAATAAHVDAKLRAAGSKTVVLHGPQALVDVSKSDGCDTVVAAIVGAAGLAPSLAAARAGKRILLANKEALVMSGAIFMDAVRDHGAILLPVDSEHNAIFQCMPRDAAEHGGISKIILTASGGPFRTREPATLVDVTPDEACKHPNWVMGRKISVDSATMMNKGLEVIEAHWIFGLPGDRIDVLIHPQSVIHSLVSYRDGSVLAQLGNPDMRTPIAHALAFPERVDAGVDQLDLAQIAQLSFEKPDYARFPCLALALKALEEGGIASAALNAANEVAVEAFLERRIGFMAIAATVDAVLNTLPNRAPDGLDDVLAADAEARRLAAAIIAKAPAPRVERTV</sequence>
<accession>A0K8D7</accession>
<name>DXR_BURCH</name>
<organism>
    <name type="scientific">Burkholderia cenocepacia (strain HI2424)</name>
    <dbReference type="NCBI Taxonomy" id="331272"/>
    <lineage>
        <taxon>Bacteria</taxon>
        <taxon>Pseudomonadati</taxon>
        <taxon>Pseudomonadota</taxon>
        <taxon>Betaproteobacteria</taxon>
        <taxon>Burkholderiales</taxon>
        <taxon>Burkholderiaceae</taxon>
        <taxon>Burkholderia</taxon>
        <taxon>Burkholderia cepacia complex</taxon>
    </lineage>
</organism>
<comment type="function">
    <text evidence="1">Catalyzes the NADPH-dependent rearrangement and reduction of 1-deoxy-D-xylulose-5-phosphate (DXP) to 2-C-methyl-D-erythritol 4-phosphate (MEP).</text>
</comment>
<comment type="catalytic activity">
    <reaction evidence="1">
        <text>2-C-methyl-D-erythritol 4-phosphate + NADP(+) = 1-deoxy-D-xylulose 5-phosphate + NADPH + H(+)</text>
        <dbReference type="Rhea" id="RHEA:13717"/>
        <dbReference type="ChEBI" id="CHEBI:15378"/>
        <dbReference type="ChEBI" id="CHEBI:57783"/>
        <dbReference type="ChEBI" id="CHEBI:57792"/>
        <dbReference type="ChEBI" id="CHEBI:58262"/>
        <dbReference type="ChEBI" id="CHEBI:58349"/>
        <dbReference type="EC" id="1.1.1.267"/>
    </reaction>
    <physiologicalReaction direction="right-to-left" evidence="1">
        <dbReference type="Rhea" id="RHEA:13719"/>
    </physiologicalReaction>
</comment>
<comment type="cofactor">
    <cofactor evidence="1">
        <name>Mg(2+)</name>
        <dbReference type="ChEBI" id="CHEBI:18420"/>
    </cofactor>
    <cofactor evidence="1">
        <name>Mn(2+)</name>
        <dbReference type="ChEBI" id="CHEBI:29035"/>
    </cofactor>
</comment>
<comment type="pathway">
    <text evidence="1">Isoprenoid biosynthesis; isopentenyl diphosphate biosynthesis via DXP pathway; isopentenyl diphosphate from 1-deoxy-D-xylulose 5-phosphate: step 1/6.</text>
</comment>
<comment type="similarity">
    <text evidence="1">Belongs to the DXR family.</text>
</comment>
<reference key="1">
    <citation type="submission" date="2006-08" db="EMBL/GenBank/DDBJ databases">
        <title>Complete sequence of chromosome 1 of Burkholderia cenocepacia HI2424.</title>
        <authorList>
            <person name="Copeland A."/>
            <person name="Lucas S."/>
            <person name="Lapidus A."/>
            <person name="Barry K."/>
            <person name="Detter J.C."/>
            <person name="Glavina del Rio T."/>
            <person name="Hammon N."/>
            <person name="Israni S."/>
            <person name="Pitluck S."/>
            <person name="Chain P."/>
            <person name="Malfatti S."/>
            <person name="Shin M."/>
            <person name="Vergez L."/>
            <person name="Schmutz J."/>
            <person name="Larimer F."/>
            <person name="Land M."/>
            <person name="Hauser L."/>
            <person name="Kyrpides N."/>
            <person name="Kim E."/>
            <person name="LiPuma J.J."/>
            <person name="Gonzalez C.F."/>
            <person name="Konstantinidis K."/>
            <person name="Tiedje J.M."/>
            <person name="Richardson P."/>
        </authorList>
    </citation>
    <scope>NUCLEOTIDE SEQUENCE [LARGE SCALE GENOMIC DNA]</scope>
    <source>
        <strain>HI2424</strain>
    </source>
</reference>